<sequence>METANYTKVTEFVLTGLSQTREVQLVLFVIFLSFYLFILPGNILIICTIRLDPHLTSPMYFLLANLALLDIWYSSITAPKMLIDFFVERKIISFGGCIAQLFFLHFVGASEMFLLTVMAYDRYAAICRPLHYATIMNRRLCCILVALSWMGGFIHSIIQVALIVRLPFCGPNELDSYFCDITQVVRIACANTFPEELVMICSSGLISVVCFIALLMSYAFLLALLKKHSGSGENTNRAMSTCYSHITIVVLMFGPSIYIYARPFDSFSLDKVVSVFHTVIFPLLNPIIYTLRNKEVKAAMRKVVTKYILCEEK</sequence>
<proteinExistence type="evidence at transcript level"/>
<comment type="function">
    <text evidence="4">Olfactory receptor that acts as a receptor of Asprosin hormone, potentially at the surface of hepatocytes and may help to promote hepatocyte glucose release.</text>
</comment>
<comment type="subcellular location">
    <subcellularLocation>
        <location evidence="4">Cell membrane</location>
        <topology evidence="3">Multi-pass membrane protein</topology>
    </subcellularLocation>
</comment>
<comment type="tissue specificity">
    <text evidence="4">Highly expressed in the testis and olfactory bulb.</text>
</comment>
<comment type="miscellaneous">
    <text evidence="6">The human olfactory receptor 4M1 (Q8NGD0) is not the one to one ortholog of mouse Or4m1 (Q8VFT4).</text>
</comment>
<comment type="similarity">
    <text evidence="6">Belongs to the G-protein coupled receptor 1 family.</text>
</comment>
<comment type="online information" name="Human Olfactory Receptor Data Exploratorium (HORDE)">
    <link uri="http://genome.weizmann.ac.il/horde/card/index/symbol:OR4M1"/>
</comment>
<protein>
    <recommendedName>
        <fullName evidence="5">Olfactory receptor 4M1</fullName>
    </recommendedName>
    <alternativeName>
        <fullName>Olfactory receptor OR14-7</fullName>
    </alternativeName>
</protein>
<organism>
    <name type="scientific">Homo sapiens</name>
    <name type="common">Human</name>
    <dbReference type="NCBI Taxonomy" id="9606"/>
    <lineage>
        <taxon>Eukaryota</taxon>
        <taxon>Metazoa</taxon>
        <taxon>Chordata</taxon>
        <taxon>Craniata</taxon>
        <taxon>Vertebrata</taxon>
        <taxon>Euteleostomi</taxon>
        <taxon>Mammalia</taxon>
        <taxon>Eutheria</taxon>
        <taxon>Euarchontoglires</taxon>
        <taxon>Primates</taxon>
        <taxon>Haplorrhini</taxon>
        <taxon>Catarrhini</taxon>
        <taxon>Hominidae</taxon>
        <taxon>Homo</taxon>
    </lineage>
</organism>
<reference key="1">
    <citation type="submission" date="2001-07" db="EMBL/GenBank/DDBJ databases">
        <title>Genome-wide discovery and analysis of human seven transmembrane helix receptor genes.</title>
        <authorList>
            <person name="Suwa M."/>
            <person name="Sato T."/>
            <person name="Okouchi I."/>
            <person name="Arita M."/>
            <person name="Futami K."/>
            <person name="Matsumoto S."/>
            <person name="Tsutsumi S."/>
            <person name="Aburatani H."/>
            <person name="Asai K."/>
            <person name="Akiyama Y."/>
        </authorList>
    </citation>
    <scope>NUCLEOTIDE SEQUENCE [GENOMIC DNA]</scope>
</reference>
<reference key="2">
    <citation type="submission" date="2005-09" db="EMBL/GenBank/DDBJ databases">
        <authorList>
            <person name="Mural R.J."/>
            <person name="Istrail S."/>
            <person name="Sutton G.G."/>
            <person name="Florea L."/>
            <person name="Halpern A.L."/>
            <person name="Mobarry C.M."/>
            <person name="Lippert R."/>
            <person name="Walenz B."/>
            <person name="Shatkay H."/>
            <person name="Dew I."/>
            <person name="Miller J.R."/>
            <person name="Flanigan M.J."/>
            <person name="Edwards N.J."/>
            <person name="Bolanos R."/>
            <person name="Fasulo D."/>
            <person name="Halldorsson B.V."/>
            <person name="Hannenhalli S."/>
            <person name="Turner R."/>
            <person name="Yooseph S."/>
            <person name="Lu F."/>
            <person name="Nusskern D.R."/>
            <person name="Shue B.C."/>
            <person name="Zheng X.H."/>
            <person name="Zhong F."/>
            <person name="Delcher A.L."/>
            <person name="Huson D.H."/>
            <person name="Kravitz S.A."/>
            <person name="Mouchard L."/>
            <person name="Reinert K."/>
            <person name="Remington K.A."/>
            <person name="Clark A.G."/>
            <person name="Waterman M.S."/>
            <person name="Eichler E.E."/>
            <person name="Adams M.D."/>
            <person name="Hunkapiller M.W."/>
            <person name="Myers E.W."/>
            <person name="Venter J.C."/>
        </authorList>
    </citation>
    <scope>NUCLEOTIDE SEQUENCE [LARGE SCALE GENOMIC DNA]</scope>
</reference>
<reference key="3">
    <citation type="journal article" date="2004" name="Genome Res.">
        <title>The status, quality, and expansion of the NIH full-length cDNA project: the Mammalian Gene Collection (MGC).</title>
        <authorList>
            <consortium name="The MGC Project Team"/>
        </authorList>
    </citation>
    <scope>NUCLEOTIDE SEQUENCE [LARGE SCALE MRNA]</scope>
    <source>
        <tissue>Testis</tissue>
    </source>
</reference>
<reference key="4">
    <citation type="journal article" date="2004" name="Proc. Natl. Acad. Sci. U.S.A.">
        <title>The human olfactory receptor gene family.</title>
        <authorList>
            <person name="Malnic B."/>
            <person name="Godfrey P.A."/>
            <person name="Buck L.B."/>
        </authorList>
    </citation>
    <scope>IDENTIFICATION</scope>
</reference>
<reference key="5">
    <citation type="journal article" date="2004" name="Proc. Natl. Acad. Sci. U.S.A.">
        <authorList>
            <person name="Malnic B."/>
            <person name="Godfrey P.A."/>
            <person name="Buck L.B."/>
        </authorList>
    </citation>
    <scope>ERRATUM OF PUBMED:14983052</scope>
</reference>
<reference key="6">
    <citation type="journal article" date="2019" name="Cell Metab.">
        <title>OLFR734 mediates glucose metabolism as a receptor of asprosin.</title>
        <authorList>
            <person name="Li E."/>
            <person name="Shan H."/>
            <person name="Chen L."/>
            <person name="Long A."/>
            <person name="Zhang Y."/>
            <person name="Liu Y."/>
            <person name="Jia L."/>
            <person name="Wei F."/>
            <person name="Han J."/>
            <person name="Li T."/>
            <person name="Liu X."/>
            <person name="Deng H."/>
            <person name="Wang Y."/>
        </authorList>
    </citation>
    <scope>FUNCTION</scope>
    <scope>SUBCELLULAR LOCATION</scope>
    <scope>TISSUE SPECIFICITY</scope>
</reference>
<evidence type="ECO:0000255" key="1"/>
<evidence type="ECO:0000255" key="2">
    <source>
        <dbReference type="PROSITE-ProRule" id="PRU00521"/>
    </source>
</evidence>
<evidence type="ECO:0000255" key="3">
    <source>
        <dbReference type="RuleBase" id="RU363047"/>
    </source>
</evidence>
<evidence type="ECO:0000269" key="4">
    <source>
    </source>
</evidence>
<evidence type="ECO:0000303" key="5">
    <source>
    </source>
</evidence>
<evidence type="ECO:0000305" key="6"/>
<evidence type="ECO:0000312" key="7">
    <source>
        <dbReference type="HGNC" id="HGNC:14735"/>
    </source>
</evidence>
<gene>
    <name evidence="5 7" type="primary">OR4M1</name>
</gene>
<keyword id="KW-1003">Cell membrane</keyword>
<keyword id="KW-1015">Disulfide bond</keyword>
<keyword id="KW-0297">G-protein coupled receptor</keyword>
<keyword id="KW-0325">Glycoprotein</keyword>
<keyword id="KW-0472">Membrane</keyword>
<keyword id="KW-0552">Olfaction</keyword>
<keyword id="KW-0675">Receptor</keyword>
<keyword id="KW-1185">Reference proteome</keyword>
<keyword id="KW-0716">Sensory transduction</keyword>
<keyword id="KW-0807">Transducer</keyword>
<keyword id="KW-0812">Transmembrane</keyword>
<keyword id="KW-1133">Transmembrane helix</keyword>
<dbReference type="EMBL" id="AB065886">
    <property type="protein sequence ID" value="BAC06103.1"/>
    <property type="molecule type" value="Genomic_DNA"/>
</dbReference>
<dbReference type="EMBL" id="CH471078">
    <property type="protein sequence ID" value="EAW66499.1"/>
    <property type="molecule type" value="Genomic_DNA"/>
</dbReference>
<dbReference type="EMBL" id="BC136987">
    <property type="protein sequence ID" value="AAI36988.1"/>
    <property type="molecule type" value="mRNA"/>
</dbReference>
<dbReference type="EMBL" id="BK004359">
    <property type="protein sequence ID" value="DAA04757.1"/>
    <property type="molecule type" value="Genomic_DNA"/>
</dbReference>
<dbReference type="CCDS" id="CCDS32021.1"/>
<dbReference type="RefSeq" id="NP_001005500.1">
    <property type="nucleotide sequence ID" value="NM_001005500.2"/>
</dbReference>
<dbReference type="SMR" id="Q8NGD0"/>
<dbReference type="BioGRID" id="137667">
    <property type="interactions" value="1"/>
</dbReference>
<dbReference type="FunCoup" id="Q8NGD0">
    <property type="interactions" value="454"/>
</dbReference>
<dbReference type="IntAct" id="Q8NGD0">
    <property type="interactions" value="1"/>
</dbReference>
<dbReference type="STRING" id="9606.ENSP00000492985"/>
<dbReference type="GlyCosmos" id="Q8NGD0">
    <property type="glycosylation" value="1 site, No reported glycans"/>
</dbReference>
<dbReference type="GlyGen" id="Q8NGD0">
    <property type="glycosylation" value="1 site"/>
</dbReference>
<dbReference type="BioMuta" id="OR4M1"/>
<dbReference type="DMDM" id="38372670"/>
<dbReference type="PaxDb" id="9606-ENSP00000319654"/>
<dbReference type="PeptideAtlas" id="Q8NGD0"/>
<dbReference type="Antibodypedia" id="67688">
    <property type="antibodies" value="76 antibodies from 17 providers"/>
</dbReference>
<dbReference type="DNASU" id="441670"/>
<dbReference type="Ensembl" id="ENST00000315957.4">
    <property type="protein sequence ID" value="ENSP00000319654.4"/>
    <property type="gene ID" value="ENSG00000176299.5"/>
</dbReference>
<dbReference type="Ensembl" id="ENST00000641200.1">
    <property type="protein sequence ID" value="ENSP00000492985.1"/>
    <property type="gene ID" value="ENSG00000176299.5"/>
</dbReference>
<dbReference type="GeneID" id="441670"/>
<dbReference type="KEGG" id="hsa:441670"/>
<dbReference type="MANE-Select" id="ENST00000641200.1">
    <property type="protein sequence ID" value="ENSP00000492985.1"/>
    <property type="RefSeq nucleotide sequence ID" value="NM_001005500.2"/>
    <property type="RefSeq protein sequence ID" value="NP_001005500.1"/>
</dbReference>
<dbReference type="UCSC" id="uc010tku.3">
    <property type="organism name" value="human"/>
</dbReference>
<dbReference type="AGR" id="HGNC:14735"/>
<dbReference type="CTD" id="441670"/>
<dbReference type="DisGeNET" id="441670"/>
<dbReference type="GeneCards" id="OR4M1"/>
<dbReference type="HGNC" id="HGNC:14735">
    <property type="gene designation" value="OR4M1"/>
</dbReference>
<dbReference type="HPA" id="ENSG00000176299">
    <property type="expression patterns" value="Not detected"/>
</dbReference>
<dbReference type="MIM" id="619939">
    <property type="type" value="gene"/>
</dbReference>
<dbReference type="neXtProt" id="NX_Q8NGD0"/>
<dbReference type="PharmGKB" id="PA32327"/>
<dbReference type="VEuPathDB" id="HostDB:ENSG00000176299"/>
<dbReference type="eggNOG" id="ENOG502SKDS">
    <property type="taxonomic scope" value="Eukaryota"/>
</dbReference>
<dbReference type="GeneTree" id="ENSGT00940000163142"/>
<dbReference type="HOGENOM" id="CLU_012526_8_2_1"/>
<dbReference type="InParanoid" id="Q8NGD0"/>
<dbReference type="OMA" id="HITIVVF"/>
<dbReference type="OrthoDB" id="6130476at2759"/>
<dbReference type="PAN-GO" id="Q8NGD0">
    <property type="GO annotations" value="2 GO annotations based on evolutionary models"/>
</dbReference>
<dbReference type="PhylomeDB" id="Q8NGD0"/>
<dbReference type="TreeFam" id="TF338273"/>
<dbReference type="PathwayCommons" id="Q8NGD0"/>
<dbReference type="Reactome" id="R-HSA-9752946">
    <property type="pathway name" value="Expression and translocation of olfactory receptors"/>
</dbReference>
<dbReference type="BioGRID-ORCS" id="441670">
    <property type="hits" value="8 hits in 638 CRISPR screens"/>
</dbReference>
<dbReference type="GeneWiki" id="OR4M1"/>
<dbReference type="GenomeRNAi" id="441670"/>
<dbReference type="Pharos" id="Q8NGD0">
    <property type="development level" value="Tdark"/>
</dbReference>
<dbReference type="PRO" id="PR:Q8NGD0"/>
<dbReference type="Proteomes" id="UP000005640">
    <property type="component" value="Chromosome 14"/>
</dbReference>
<dbReference type="RNAct" id="Q8NGD0">
    <property type="molecule type" value="protein"/>
</dbReference>
<dbReference type="Bgee" id="ENSG00000176299">
    <property type="expression patterns" value="Expressed in male germ line stem cell (sensu Vertebrata) in testis and 3 other cell types or tissues"/>
</dbReference>
<dbReference type="ExpressionAtlas" id="Q8NGD0">
    <property type="expression patterns" value="baseline and differential"/>
</dbReference>
<dbReference type="GO" id="GO:0005886">
    <property type="term" value="C:plasma membrane"/>
    <property type="evidence" value="ECO:0000314"/>
    <property type="project" value="UniProtKB"/>
</dbReference>
<dbReference type="GO" id="GO:0004930">
    <property type="term" value="F:G protein-coupled receptor activity"/>
    <property type="evidence" value="ECO:0007669"/>
    <property type="project" value="UniProtKB-KW"/>
</dbReference>
<dbReference type="GO" id="GO:0004984">
    <property type="term" value="F:olfactory receptor activity"/>
    <property type="evidence" value="ECO:0000314"/>
    <property type="project" value="UniProtKB"/>
</dbReference>
<dbReference type="CDD" id="cd15937">
    <property type="entry name" value="7tmA_OR4N-like"/>
    <property type="match status" value="1"/>
</dbReference>
<dbReference type="FunFam" id="1.10.1220.70:FF:000001">
    <property type="entry name" value="Olfactory receptor"/>
    <property type="match status" value="1"/>
</dbReference>
<dbReference type="FunFam" id="1.20.1070.10:FF:000012">
    <property type="entry name" value="Olfactory receptor"/>
    <property type="match status" value="1"/>
</dbReference>
<dbReference type="Gene3D" id="1.20.1070.10">
    <property type="entry name" value="Rhodopsin 7-helix transmembrane proteins"/>
    <property type="match status" value="1"/>
</dbReference>
<dbReference type="InterPro" id="IPR000276">
    <property type="entry name" value="GPCR_Rhodpsn"/>
</dbReference>
<dbReference type="InterPro" id="IPR017452">
    <property type="entry name" value="GPCR_Rhodpsn_7TM"/>
</dbReference>
<dbReference type="InterPro" id="IPR000725">
    <property type="entry name" value="Olfact_rcpt"/>
</dbReference>
<dbReference type="InterPro" id="IPR050427">
    <property type="entry name" value="Olfactory_Receptors"/>
</dbReference>
<dbReference type="PANTHER" id="PTHR48002">
    <property type="entry name" value="OLFACTORY RECEPTOR"/>
    <property type="match status" value="1"/>
</dbReference>
<dbReference type="Pfam" id="PF13853">
    <property type="entry name" value="7tm_4"/>
    <property type="match status" value="1"/>
</dbReference>
<dbReference type="PRINTS" id="PR00237">
    <property type="entry name" value="GPCRRHODOPSN"/>
</dbReference>
<dbReference type="PRINTS" id="PR00245">
    <property type="entry name" value="OLFACTORYR"/>
</dbReference>
<dbReference type="SUPFAM" id="SSF81321">
    <property type="entry name" value="Family A G protein-coupled receptor-like"/>
    <property type="match status" value="1"/>
</dbReference>
<dbReference type="PROSITE" id="PS00237">
    <property type="entry name" value="G_PROTEIN_RECEP_F1_1"/>
    <property type="match status" value="1"/>
</dbReference>
<dbReference type="PROSITE" id="PS50262">
    <property type="entry name" value="G_PROTEIN_RECEP_F1_2"/>
    <property type="match status" value="1"/>
</dbReference>
<feature type="chain" id="PRO_0000150561" description="Olfactory receptor 4M1">
    <location>
        <begin position="1"/>
        <end position="313"/>
    </location>
</feature>
<feature type="topological domain" description="Extracellular" evidence="1">
    <location>
        <begin position="1"/>
        <end position="25"/>
    </location>
</feature>
<feature type="transmembrane region" description="Helical; Name=1" evidence="1">
    <location>
        <begin position="26"/>
        <end position="49"/>
    </location>
</feature>
<feature type="topological domain" description="Cytoplasmic" evidence="1">
    <location>
        <begin position="50"/>
        <end position="57"/>
    </location>
</feature>
<feature type="transmembrane region" description="Helical; Name=2" evidence="1">
    <location>
        <begin position="58"/>
        <end position="79"/>
    </location>
</feature>
<feature type="topological domain" description="Extracellular" evidence="1">
    <location>
        <begin position="80"/>
        <end position="100"/>
    </location>
</feature>
<feature type="transmembrane region" description="Helical; Name=3" evidence="1">
    <location>
        <begin position="101"/>
        <end position="120"/>
    </location>
</feature>
<feature type="topological domain" description="Cytoplasmic" evidence="1">
    <location>
        <begin position="121"/>
        <end position="139"/>
    </location>
</feature>
<feature type="transmembrane region" description="Helical; Name=4" evidence="1">
    <location>
        <begin position="140"/>
        <end position="158"/>
    </location>
</feature>
<feature type="topological domain" description="Extracellular" evidence="1">
    <location>
        <begin position="159"/>
        <end position="195"/>
    </location>
</feature>
<feature type="transmembrane region" description="Helical; Name=5" evidence="1">
    <location>
        <begin position="196"/>
        <end position="219"/>
    </location>
</feature>
<feature type="topological domain" description="Cytoplasmic" evidence="1">
    <location>
        <begin position="220"/>
        <end position="237"/>
    </location>
</feature>
<feature type="transmembrane region" description="Helical; Name=6" evidence="1">
    <location>
        <begin position="238"/>
        <end position="260"/>
    </location>
</feature>
<feature type="topological domain" description="Extracellular" evidence="1">
    <location>
        <begin position="261"/>
        <end position="271"/>
    </location>
</feature>
<feature type="transmembrane region" description="Helical; Name=7" evidence="1">
    <location>
        <begin position="272"/>
        <end position="291"/>
    </location>
</feature>
<feature type="topological domain" description="Cytoplasmic" evidence="1">
    <location>
        <begin position="292"/>
        <end position="313"/>
    </location>
</feature>
<feature type="glycosylation site" description="N-linked (GlcNAc...) asparagine" evidence="1">
    <location>
        <position position="5"/>
    </location>
</feature>
<feature type="disulfide bond" evidence="2">
    <location>
        <begin position="97"/>
        <end position="189"/>
    </location>
</feature>
<feature type="sequence variant" id="VAR_034206" description="In dbSNP:rs2635535.">
    <original>T</original>
    <variation>I</variation>
    <location>
        <position position="116"/>
    </location>
</feature>
<feature type="sequence variant" id="VAR_048031" description="In dbSNP:rs2815960.">
    <original>G</original>
    <variation>D</variation>
    <location>
        <position position="232"/>
    </location>
</feature>
<name>OR4M1_HUMAN</name>
<accession>Q8NGD0</accession>
<accession>B9EH18</accession>
<accession>Q6IFA3</accession>